<gene>
    <name type="ordered locus">all4662</name>
</gene>
<name>Y4662_NOSS1</name>
<evidence type="ECO:0000255" key="1">
    <source>
        <dbReference type="HAMAP-Rule" id="MF_00632"/>
    </source>
</evidence>
<feature type="chain" id="PRO_0000106169" description="Nucleotide-binding protein all4662">
    <location>
        <begin position="1"/>
        <end position="163"/>
    </location>
</feature>
<protein>
    <recommendedName>
        <fullName evidence="1">Nucleotide-binding protein all4662</fullName>
    </recommendedName>
</protein>
<proteinExistence type="inferred from homology"/>
<comment type="function">
    <text evidence="1">Nucleotide-binding protein.</text>
</comment>
<comment type="similarity">
    <text evidence="1">Belongs to the YajQ family.</text>
</comment>
<organism>
    <name type="scientific">Nostoc sp. (strain PCC 7120 / SAG 25.82 / UTEX 2576)</name>
    <dbReference type="NCBI Taxonomy" id="103690"/>
    <lineage>
        <taxon>Bacteria</taxon>
        <taxon>Bacillati</taxon>
        <taxon>Cyanobacteriota</taxon>
        <taxon>Cyanophyceae</taxon>
        <taxon>Nostocales</taxon>
        <taxon>Nostocaceae</taxon>
        <taxon>Nostoc</taxon>
    </lineage>
</organism>
<reference key="1">
    <citation type="journal article" date="2001" name="DNA Res.">
        <title>Complete genomic sequence of the filamentous nitrogen-fixing cyanobacterium Anabaena sp. strain PCC 7120.</title>
        <authorList>
            <person name="Kaneko T."/>
            <person name="Nakamura Y."/>
            <person name="Wolk C.P."/>
            <person name="Kuritz T."/>
            <person name="Sasamoto S."/>
            <person name="Watanabe A."/>
            <person name="Iriguchi M."/>
            <person name="Ishikawa A."/>
            <person name="Kawashima K."/>
            <person name="Kimura T."/>
            <person name="Kishida Y."/>
            <person name="Kohara M."/>
            <person name="Matsumoto M."/>
            <person name="Matsuno A."/>
            <person name="Muraki A."/>
            <person name="Nakazaki N."/>
            <person name="Shimpo S."/>
            <person name="Sugimoto M."/>
            <person name="Takazawa M."/>
            <person name="Yamada M."/>
            <person name="Yasuda M."/>
            <person name="Tabata S."/>
        </authorList>
    </citation>
    <scope>NUCLEOTIDE SEQUENCE [LARGE SCALE GENOMIC DNA]</scope>
    <source>
        <strain>PCC 7120 / SAG 25.82 / UTEX 2576</strain>
    </source>
</reference>
<keyword id="KW-0547">Nucleotide-binding</keyword>
<keyword id="KW-1185">Reference proteome</keyword>
<sequence>MASTYSFDIVSDFDRQELVNAVDQVIRDLKSRYDLKDTQTTVELGEEKITIGTDSEFTLESVHNILREKAAKRNLSQKIFDFGKVESASGNRVRQEITLKKGISQDIAKQISKLIRDEFKKVQASIQGDAVRVSAKAKDDLQIVIQRLKQEDYPVALQFTNYR</sequence>
<accession>Q8YNA5</accession>
<dbReference type="EMBL" id="BA000019">
    <property type="protein sequence ID" value="BAB76361.1"/>
    <property type="molecule type" value="Genomic_DNA"/>
</dbReference>
<dbReference type="PIR" id="AF2388">
    <property type="entry name" value="AF2388"/>
</dbReference>
<dbReference type="RefSeq" id="WP_010998793.1">
    <property type="nucleotide sequence ID" value="NZ_RSCN01000020.1"/>
</dbReference>
<dbReference type="SMR" id="Q8YNA5"/>
<dbReference type="STRING" id="103690.gene:10496714"/>
<dbReference type="KEGG" id="ana:all4662"/>
<dbReference type="eggNOG" id="COG1666">
    <property type="taxonomic scope" value="Bacteria"/>
</dbReference>
<dbReference type="OrthoDB" id="9801447at2"/>
<dbReference type="Proteomes" id="UP000002483">
    <property type="component" value="Chromosome"/>
</dbReference>
<dbReference type="GO" id="GO:0005829">
    <property type="term" value="C:cytosol"/>
    <property type="evidence" value="ECO:0007669"/>
    <property type="project" value="TreeGrafter"/>
</dbReference>
<dbReference type="GO" id="GO:0000166">
    <property type="term" value="F:nucleotide binding"/>
    <property type="evidence" value="ECO:0007669"/>
    <property type="project" value="TreeGrafter"/>
</dbReference>
<dbReference type="CDD" id="cd11740">
    <property type="entry name" value="YajQ_like"/>
    <property type="match status" value="1"/>
</dbReference>
<dbReference type="Gene3D" id="3.30.70.860">
    <property type="match status" value="1"/>
</dbReference>
<dbReference type="Gene3D" id="3.30.70.990">
    <property type="entry name" value="YajQ-like, domain 2"/>
    <property type="match status" value="1"/>
</dbReference>
<dbReference type="HAMAP" id="MF_00632">
    <property type="entry name" value="YajQ"/>
    <property type="match status" value="1"/>
</dbReference>
<dbReference type="InterPro" id="IPR007551">
    <property type="entry name" value="DUF520"/>
</dbReference>
<dbReference type="InterPro" id="IPR035571">
    <property type="entry name" value="UPF0234-like_C"/>
</dbReference>
<dbReference type="InterPro" id="IPR035570">
    <property type="entry name" value="UPF0234_N"/>
</dbReference>
<dbReference type="InterPro" id="IPR036183">
    <property type="entry name" value="YajQ-like_sf"/>
</dbReference>
<dbReference type="NCBIfam" id="NF003819">
    <property type="entry name" value="PRK05412.1"/>
    <property type="match status" value="1"/>
</dbReference>
<dbReference type="PANTHER" id="PTHR30476">
    <property type="entry name" value="UPF0234 PROTEIN YAJQ"/>
    <property type="match status" value="1"/>
</dbReference>
<dbReference type="PANTHER" id="PTHR30476:SF0">
    <property type="entry name" value="UPF0234 PROTEIN YAJQ"/>
    <property type="match status" value="1"/>
</dbReference>
<dbReference type="Pfam" id="PF04461">
    <property type="entry name" value="DUF520"/>
    <property type="match status" value="1"/>
</dbReference>
<dbReference type="SUPFAM" id="SSF89963">
    <property type="entry name" value="YajQ-like"/>
    <property type="match status" value="2"/>
</dbReference>